<comment type="function">
    <text evidence="1">Catalyzes the conversion of 4-hydroxy-tetrahydrodipicolinate (HTPA) to tetrahydrodipicolinate.</text>
</comment>
<comment type="catalytic activity">
    <reaction evidence="1">
        <text>(S)-2,3,4,5-tetrahydrodipicolinate + NAD(+) + H2O = (2S,4S)-4-hydroxy-2,3,4,5-tetrahydrodipicolinate + NADH + H(+)</text>
        <dbReference type="Rhea" id="RHEA:35323"/>
        <dbReference type="ChEBI" id="CHEBI:15377"/>
        <dbReference type="ChEBI" id="CHEBI:15378"/>
        <dbReference type="ChEBI" id="CHEBI:16845"/>
        <dbReference type="ChEBI" id="CHEBI:57540"/>
        <dbReference type="ChEBI" id="CHEBI:57945"/>
        <dbReference type="ChEBI" id="CHEBI:67139"/>
        <dbReference type="EC" id="1.17.1.8"/>
    </reaction>
</comment>
<comment type="catalytic activity">
    <reaction evidence="1">
        <text>(S)-2,3,4,5-tetrahydrodipicolinate + NADP(+) + H2O = (2S,4S)-4-hydroxy-2,3,4,5-tetrahydrodipicolinate + NADPH + H(+)</text>
        <dbReference type="Rhea" id="RHEA:35331"/>
        <dbReference type="ChEBI" id="CHEBI:15377"/>
        <dbReference type="ChEBI" id="CHEBI:15378"/>
        <dbReference type="ChEBI" id="CHEBI:16845"/>
        <dbReference type="ChEBI" id="CHEBI:57783"/>
        <dbReference type="ChEBI" id="CHEBI:58349"/>
        <dbReference type="ChEBI" id="CHEBI:67139"/>
        <dbReference type="EC" id="1.17.1.8"/>
    </reaction>
</comment>
<comment type="pathway">
    <text evidence="1">Amino-acid biosynthesis; L-lysine biosynthesis via DAP pathway; (S)-tetrahydrodipicolinate from L-aspartate: step 4/4.</text>
</comment>
<comment type="subcellular location">
    <subcellularLocation>
        <location evidence="1">Cytoplasm</location>
    </subcellularLocation>
</comment>
<comment type="similarity">
    <text evidence="1">Belongs to the DapB family.</text>
</comment>
<comment type="caution">
    <text evidence="2">Was originally thought to be a dihydrodipicolinate reductase (DHDPR), catalyzing the conversion of dihydrodipicolinate to tetrahydrodipicolinate. However, it was shown in E.coli that the substrate of the enzymatic reaction is not dihydrodipicolinate (DHDP) but in fact (2S,4S)-4-hydroxy-2,3,4,5-tetrahydrodipicolinic acid (HTPA), the product released by the DapA-catalyzed reaction.</text>
</comment>
<dbReference type="EC" id="1.17.1.8" evidence="1"/>
<dbReference type="EMBL" id="CP000254">
    <property type="protein sequence ID" value="ABD41227.1"/>
    <property type="molecule type" value="Genomic_DNA"/>
</dbReference>
<dbReference type="RefSeq" id="WP_011448496.1">
    <property type="nucleotide sequence ID" value="NC_007796.1"/>
</dbReference>
<dbReference type="SMR" id="Q2FNQ9"/>
<dbReference type="FunCoup" id="Q2FNQ9">
    <property type="interactions" value="86"/>
</dbReference>
<dbReference type="STRING" id="323259.Mhun_1493"/>
<dbReference type="EnsemblBacteria" id="ABD41227">
    <property type="protein sequence ID" value="ABD41227"/>
    <property type="gene ID" value="Mhun_1493"/>
</dbReference>
<dbReference type="GeneID" id="3922724"/>
<dbReference type="KEGG" id="mhu:Mhun_1493"/>
<dbReference type="eggNOG" id="arCOG04393">
    <property type="taxonomic scope" value="Archaea"/>
</dbReference>
<dbReference type="HOGENOM" id="CLU_047479_2_1_2"/>
<dbReference type="InParanoid" id="Q2FNQ9"/>
<dbReference type="OrthoDB" id="195035at2157"/>
<dbReference type="UniPathway" id="UPA00034">
    <property type="reaction ID" value="UER00018"/>
</dbReference>
<dbReference type="Proteomes" id="UP000001941">
    <property type="component" value="Chromosome"/>
</dbReference>
<dbReference type="GO" id="GO:0005737">
    <property type="term" value="C:cytoplasm"/>
    <property type="evidence" value="ECO:0007669"/>
    <property type="project" value="UniProtKB-SubCell"/>
</dbReference>
<dbReference type="GO" id="GO:0008839">
    <property type="term" value="F:4-hydroxy-tetrahydrodipicolinate reductase"/>
    <property type="evidence" value="ECO:0007669"/>
    <property type="project" value="UniProtKB-EC"/>
</dbReference>
<dbReference type="GO" id="GO:0051287">
    <property type="term" value="F:NAD binding"/>
    <property type="evidence" value="ECO:0007669"/>
    <property type="project" value="UniProtKB-UniRule"/>
</dbReference>
<dbReference type="GO" id="GO:0050661">
    <property type="term" value="F:NADP binding"/>
    <property type="evidence" value="ECO:0007669"/>
    <property type="project" value="UniProtKB-UniRule"/>
</dbReference>
<dbReference type="GO" id="GO:0016726">
    <property type="term" value="F:oxidoreductase activity, acting on CH or CH2 groups, NAD or NADP as acceptor"/>
    <property type="evidence" value="ECO:0007669"/>
    <property type="project" value="UniProtKB-UniRule"/>
</dbReference>
<dbReference type="GO" id="GO:0019877">
    <property type="term" value="P:diaminopimelate biosynthetic process"/>
    <property type="evidence" value="ECO:0007669"/>
    <property type="project" value="UniProtKB-UniRule"/>
</dbReference>
<dbReference type="GO" id="GO:0009089">
    <property type="term" value="P:lysine biosynthetic process via diaminopimelate"/>
    <property type="evidence" value="ECO:0007669"/>
    <property type="project" value="UniProtKB-UniRule"/>
</dbReference>
<dbReference type="CDD" id="cd02274">
    <property type="entry name" value="DHDPR_N"/>
    <property type="match status" value="1"/>
</dbReference>
<dbReference type="Gene3D" id="3.30.360.10">
    <property type="entry name" value="Dihydrodipicolinate Reductase, domain 2"/>
    <property type="match status" value="1"/>
</dbReference>
<dbReference type="Gene3D" id="3.40.50.720">
    <property type="entry name" value="NAD(P)-binding Rossmann-like Domain"/>
    <property type="match status" value="1"/>
</dbReference>
<dbReference type="HAMAP" id="MF_00102">
    <property type="entry name" value="DapB"/>
    <property type="match status" value="1"/>
</dbReference>
<dbReference type="InterPro" id="IPR022663">
    <property type="entry name" value="DapB_C"/>
</dbReference>
<dbReference type="InterPro" id="IPR000846">
    <property type="entry name" value="DapB_N"/>
</dbReference>
<dbReference type="InterPro" id="IPR022664">
    <property type="entry name" value="DapB_N_CS"/>
</dbReference>
<dbReference type="InterPro" id="IPR023940">
    <property type="entry name" value="DHDPR_bac"/>
</dbReference>
<dbReference type="InterPro" id="IPR036291">
    <property type="entry name" value="NAD(P)-bd_dom_sf"/>
</dbReference>
<dbReference type="NCBIfam" id="TIGR00036">
    <property type="entry name" value="dapB"/>
    <property type="match status" value="1"/>
</dbReference>
<dbReference type="PANTHER" id="PTHR20836:SF0">
    <property type="entry name" value="4-HYDROXY-TETRAHYDRODIPICOLINATE REDUCTASE 1, CHLOROPLASTIC-RELATED"/>
    <property type="match status" value="1"/>
</dbReference>
<dbReference type="PANTHER" id="PTHR20836">
    <property type="entry name" value="DIHYDRODIPICOLINATE REDUCTASE"/>
    <property type="match status" value="1"/>
</dbReference>
<dbReference type="Pfam" id="PF05173">
    <property type="entry name" value="DapB_C"/>
    <property type="match status" value="1"/>
</dbReference>
<dbReference type="Pfam" id="PF01113">
    <property type="entry name" value="DapB_N"/>
    <property type="match status" value="1"/>
</dbReference>
<dbReference type="PIRSF" id="PIRSF000161">
    <property type="entry name" value="DHPR"/>
    <property type="match status" value="1"/>
</dbReference>
<dbReference type="SUPFAM" id="SSF55347">
    <property type="entry name" value="Glyceraldehyde-3-phosphate dehydrogenase-like, C-terminal domain"/>
    <property type="match status" value="1"/>
</dbReference>
<dbReference type="SUPFAM" id="SSF51735">
    <property type="entry name" value="NAD(P)-binding Rossmann-fold domains"/>
    <property type="match status" value="1"/>
</dbReference>
<dbReference type="PROSITE" id="PS01298">
    <property type="entry name" value="DAPB"/>
    <property type="match status" value="1"/>
</dbReference>
<name>DAPB_METHJ</name>
<organism>
    <name type="scientific">Methanospirillum hungatei JF-1 (strain ATCC 27890 / DSM 864 / NBRC 100397 / JF-1)</name>
    <dbReference type="NCBI Taxonomy" id="323259"/>
    <lineage>
        <taxon>Archaea</taxon>
        <taxon>Methanobacteriati</taxon>
        <taxon>Methanobacteriota</taxon>
        <taxon>Stenosarchaea group</taxon>
        <taxon>Methanomicrobia</taxon>
        <taxon>Methanomicrobiales</taxon>
        <taxon>Methanospirillaceae</taxon>
        <taxon>Methanospirillum</taxon>
    </lineage>
</organism>
<feature type="chain" id="PRO_1000008587" description="4-hydroxy-tetrahydrodipicolinate reductase">
    <location>
        <begin position="1"/>
        <end position="254"/>
    </location>
</feature>
<feature type="active site" description="Proton donor/acceptor" evidence="1">
    <location>
        <position position="147"/>
    </location>
</feature>
<feature type="active site" description="Proton donor" evidence="1">
    <location>
        <position position="151"/>
    </location>
</feature>
<feature type="binding site" evidence="1">
    <location>
        <begin position="8"/>
        <end position="13"/>
    </location>
    <ligand>
        <name>NAD(+)</name>
        <dbReference type="ChEBI" id="CHEBI:57540"/>
    </ligand>
</feature>
<feature type="binding site" evidence="1">
    <location>
        <position position="36"/>
    </location>
    <ligand>
        <name>NADP(+)</name>
        <dbReference type="ChEBI" id="CHEBI:58349"/>
    </ligand>
</feature>
<feature type="binding site" evidence="1">
    <location>
        <begin position="89"/>
        <end position="91"/>
    </location>
    <ligand>
        <name>NAD(+)</name>
        <dbReference type="ChEBI" id="CHEBI:57540"/>
    </ligand>
</feature>
<feature type="binding site" evidence="1">
    <location>
        <begin position="115"/>
        <end position="118"/>
    </location>
    <ligand>
        <name>NAD(+)</name>
        <dbReference type="ChEBI" id="CHEBI:57540"/>
    </ligand>
</feature>
<feature type="binding site" evidence="1">
    <location>
        <position position="148"/>
    </location>
    <ligand>
        <name>(S)-2,3,4,5-tetrahydrodipicolinate</name>
        <dbReference type="ChEBI" id="CHEBI:16845"/>
    </ligand>
</feature>
<feature type="binding site" evidence="1">
    <location>
        <begin position="157"/>
        <end position="158"/>
    </location>
    <ligand>
        <name>(S)-2,3,4,5-tetrahydrodipicolinate</name>
        <dbReference type="ChEBI" id="CHEBI:16845"/>
    </ligand>
</feature>
<evidence type="ECO:0000255" key="1">
    <source>
        <dbReference type="HAMAP-Rule" id="MF_00102"/>
    </source>
</evidence>
<evidence type="ECO:0000305" key="2"/>
<keyword id="KW-0028">Amino-acid biosynthesis</keyword>
<keyword id="KW-0963">Cytoplasm</keyword>
<keyword id="KW-0220">Diaminopimelate biosynthesis</keyword>
<keyword id="KW-0457">Lysine biosynthesis</keyword>
<keyword id="KW-0520">NAD</keyword>
<keyword id="KW-0521">NADP</keyword>
<keyword id="KW-0560">Oxidoreductase</keyword>
<keyword id="KW-1185">Reference proteome</keyword>
<gene>
    <name evidence="1" type="primary">dapB</name>
    <name type="ordered locus">Mhun_1493</name>
</gene>
<reference key="1">
    <citation type="journal article" date="2016" name="Stand. Genomic Sci.">
        <title>Complete genome sequence of Methanospirillum hungatei type strain JF1.</title>
        <authorList>
            <person name="Gunsalus R.P."/>
            <person name="Cook L.E."/>
            <person name="Crable B."/>
            <person name="Rohlin L."/>
            <person name="McDonald E."/>
            <person name="Mouttaki H."/>
            <person name="Sieber J.R."/>
            <person name="Poweleit N."/>
            <person name="Zhou H."/>
            <person name="Lapidus A.L."/>
            <person name="Daligault H.E."/>
            <person name="Land M."/>
            <person name="Gilna P."/>
            <person name="Ivanova N."/>
            <person name="Kyrpides N."/>
            <person name="Culley D.E."/>
            <person name="McInerney M.J."/>
        </authorList>
    </citation>
    <scope>NUCLEOTIDE SEQUENCE [LARGE SCALE GENOMIC DNA]</scope>
    <source>
        <strain>ATCC 27890 / DSM 864 / NBRC 100397 / JF-1</strain>
    </source>
</reference>
<accession>Q2FNQ9</accession>
<proteinExistence type="inferred from homology"/>
<protein>
    <recommendedName>
        <fullName evidence="1">4-hydroxy-tetrahydrodipicolinate reductase</fullName>
        <shortName evidence="1">HTPA reductase</shortName>
        <ecNumber evidence="1">1.17.1.8</ecNumber>
    </recommendedName>
</protein>
<sequence length="254" mass="27510">MIKVVICGAFGRMGTIIGEIISKEQDMQLVGGVDIKEGTFFGVPVVTSDKLADFLSSVQPDVVIDFTVAPAAAQNVPVAARAGCAIILGTTGLTQEQRKGIDAAIREGKVPAVISTNYSIGMNILWTLIRDAARKLSDYDVEVIEAHHRYKKDAPSGTARTILQILQEEIGPREEIYGREGMTERSSEIGVHVIRGGDIVGDHAVMFASNFETVTLSHRAYDRSVFAEGAVRATRWVFGKEPGIYGMKDVLNLS</sequence>